<feature type="chain" id="PRO_1000201804" description="Ribosome maturation factor RimM">
    <location>
        <begin position="1"/>
        <end position="178"/>
    </location>
</feature>
<feature type="domain" description="PRC barrel" evidence="1">
    <location>
        <begin position="100"/>
        <end position="178"/>
    </location>
</feature>
<organism>
    <name type="scientific">Azotobacter vinelandii (strain DJ / ATCC BAA-1303)</name>
    <dbReference type="NCBI Taxonomy" id="322710"/>
    <lineage>
        <taxon>Bacteria</taxon>
        <taxon>Pseudomonadati</taxon>
        <taxon>Pseudomonadota</taxon>
        <taxon>Gammaproteobacteria</taxon>
        <taxon>Pseudomonadales</taxon>
        <taxon>Pseudomonadaceae</taxon>
        <taxon>Azotobacter</taxon>
    </lineage>
</organism>
<comment type="function">
    <text evidence="1">An accessory protein needed during the final step in the assembly of 30S ribosomal subunit, possibly for assembly of the head region. Essential for efficient processing of 16S rRNA. May be needed both before and after RbfA during the maturation of 16S rRNA. It has affinity for free ribosomal 30S subunits but not for 70S ribosomes.</text>
</comment>
<comment type="subunit">
    <text evidence="1">Binds ribosomal protein uS19.</text>
</comment>
<comment type="subcellular location">
    <subcellularLocation>
        <location evidence="1">Cytoplasm</location>
    </subcellularLocation>
</comment>
<comment type="domain">
    <text evidence="1">The PRC barrel domain binds ribosomal protein uS19.</text>
</comment>
<comment type="similarity">
    <text evidence="1">Belongs to the RimM family.</text>
</comment>
<gene>
    <name evidence="1" type="primary">rimM</name>
    <name type="ordered locus">Avin_39550</name>
</gene>
<reference key="1">
    <citation type="journal article" date="2009" name="J. Bacteriol.">
        <title>Genome sequence of Azotobacter vinelandii, an obligate aerobe specialized to support diverse anaerobic metabolic processes.</title>
        <authorList>
            <person name="Setubal J.C."/>
            <person name="Dos Santos P."/>
            <person name="Goldman B.S."/>
            <person name="Ertesvaag H."/>
            <person name="Espin G."/>
            <person name="Rubio L.M."/>
            <person name="Valla S."/>
            <person name="Almeida N.F."/>
            <person name="Balasubramanian D."/>
            <person name="Cromes L."/>
            <person name="Curatti L."/>
            <person name="Du Z."/>
            <person name="Godsy E."/>
            <person name="Goodner B."/>
            <person name="Hellner-Burris K."/>
            <person name="Hernandez J.A."/>
            <person name="Houmiel K."/>
            <person name="Imperial J."/>
            <person name="Kennedy C."/>
            <person name="Larson T.J."/>
            <person name="Latreille P."/>
            <person name="Ligon L.S."/>
            <person name="Lu J."/>
            <person name="Maerk M."/>
            <person name="Miller N.M."/>
            <person name="Norton S."/>
            <person name="O'Carroll I.P."/>
            <person name="Paulsen I."/>
            <person name="Raulfs E.C."/>
            <person name="Roemer R."/>
            <person name="Rosser J."/>
            <person name="Segura D."/>
            <person name="Slater S."/>
            <person name="Stricklin S.L."/>
            <person name="Studholme D.J."/>
            <person name="Sun J."/>
            <person name="Viana C.J."/>
            <person name="Wallin E."/>
            <person name="Wang B."/>
            <person name="Wheeler C."/>
            <person name="Zhu H."/>
            <person name="Dean D.R."/>
            <person name="Dixon R."/>
            <person name="Wood D."/>
        </authorList>
    </citation>
    <scope>NUCLEOTIDE SEQUENCE [LARGE SCALE GENOMIC DNA]</scope>
    <source>
        <strain>DJ / ATCC BAA-1303</strain>
    </source>
</reference>
<dbReference type="EMBL" id="CP001157">
    <property type="protein sequence ID" value="ACO80094.1"/>
    <property type="molecule type" value="Genomic_DNA"/>
</dbReference>
<dbReference type="RefSeq" id="WP_012702469.1">
    <property type="nucleotide sequence ID" value="NC_012560.1"/>
</dbReference>
<dbReference type="SMR" id="C1DDY6"/>
<dbReference type="STRING" id="322710.Avin_39550"/>
<dbReference type="EnsemblBacteria" id="ACO80094">
    <property type="protein sequence ID" value="ACO80094"/>
    <property type="gene ID" value="Avin_39550"/>
</dbReference>
<dbReference type="GeneID" id="88186910"/>
<dbReference type="KEGG" id="avn:Avin_39550"/>
<dbReference type="eggNOG" id="COG0806">
    <property type="taxonomic scope" value="Bacteria"/>
</dbReference>
<dbReference type="HOGENOM" id="CLU_077636_1_0_6"/>
<dbReference type="OrthoDB" id="9783509at2"/>
<dbReference type="Proteomes" id="UP000002424">
    <property type="component" value="Chromosome"/>
</dbReference>
<dbReference type="GO" id="GO:0005737">
    <property type="term" value="C:cytoplasm"/>
    <property type="evidence" value="ECO:0007669"/>
    <property type="project" value="UniProtKB-SubCell"/>
</dbReference>
<dbReference type="GO" id="GO:0005840">
    <property type="term" value="C:ribosome"/>
    <property type="evidence" value="ECO:0007669"/>
    <property type="project" value="InterPro"/>
</dbReference>
<dbReference type="GO" id="GO:0043022">
    <property type="term" value="F:ribosome binding"/>
    <property type="evidence" value="ECO:0007669"/>
    <property type="project" value="InterPro"/>
</dbReference>
<dbReference type="GO" id="GO:0042274">
    <property type="term" value="P:ribosomal small subunit biogenesis"/>
    <property type="evidence" value="ECO:0007669"/>
    <property type="project" value="UniProtKB-UniRule"/>
</dbReference>
<dbReference type="GO" id="GO:0006364">
    <property type="term" value="P:rRNA processing"/>
    <property type="evidence" value="ECO:0007669"/>
    <property type="project" value="UniProtKB-UniRule"/>
</dbReference>
<dbReference type="Gene3D" id="2.30.30.240">
    <property type="entry name" value="PRC-barrel domain"/>
    <property type="match status" value="1"/>
</dbReference>
<dbReference type="Gene3D" id="2.40.30.60">
    <property type="entry name" value="RimM"/>
    <property type="match status" value="1"/>
</dbReference>
<dbReference type="HAMAP" id="MF_00014">
    <property type="entry name" value="Ribosome_mat_RimM"/>
    <property type="match status" value="1"/>
</dbReference>
<dbReference type="InterPro" id="IPR011033">
    <property type="entry name" value="PRC_barrel-like_sf"/>
</dbReference>
<dbReference type="InterPro" id="IPR056792">
    <property type="entry name" value="PRC_RimM"/>
</dbReference>
<dbReference type="InterPro" id="IPR011961">
    <property type="entry name" value="RimM"/>
</dbReference>
<dbReference type="InterPro" id="IPR002676">
    <property type="entry name" value="RimM_N"/>
</dbReference>
<dbReference type="InterPro" id="IPR036976">
    <property type="entry name" value="RimM_N_sf"/>
</dbReference>
<dbReference type="InterPro" id="IPR009000">
    <property type="entry name" value="Transl_B-barrel_sf"/>
</dbReference>
<dbReference type="NCBIfam" id="TIGR02273">
    <property type="entry name" value="16S_RimM"/>
    <property type="match status" value="1"/>
</dbReference>
<dbReference type="PANTHER" id="PTHR33692">
    <property type="entry name" value="RIBOSOME MATURATION FACTOR RIMM"/>
    <property type="match status" value="1"/>
</dbReference>
<dbReference type="PANTHER" id="PTHR33692:SF1">
    <property type="entry name" value="RIBOSOME MATURATION FACTOR RIMM"/>
    <property type="match status" value="1"/>
</dbReference>
<dbReference type="Pfam" id="PF24986">
    <property type="entry name" value="PRC_RimM"/>
    <property type="match status" value="1"/>
</dbReference>
<dbReference type="Pfam" id="PF01782">
    <property type="entry name" value="RimM"/>
    <property type="match status" value="1"/>
</dbReference>
<dbReference type="SUPFAM" id="SSF50346">
    <property type="entry name" value="PRC-barrel domain"/>
    <property type="match status" value="1"/>
</dbReference>
<dbReference type="SUPFAM" id="SSF50447">
    <property type="entry name" value="Translation proteins"/>
    <property type="match status" value="1"/>
</dbReference>
<proteinExistence type="inferred from homology"/>
<name>RIMM_AZOVD</name>
<sequence length="178" mass="20218">MDMTPASADGLIVLGKITSVHGVRGEVKVYSFTDPIDNLLDYRFWTLRRGDERRQIELVRGRPQGRLLVARLKGIEDRDGARALADFEVCVPIAQLPRLDEGEFYWHQLEGLRVVDREGRLFGKVDHLLETGANDVLVVRPCTGSLDDRERLLPYTDQCVLRVDLAAGEIRVDWDADF</sequence>
<keyword id="KW-0143">Chaperone</keyword>
<keyword id="KW-0963">Cytoplasm</keyword>
<keyword id="KW-0690">Ribosome biogenesis</keyword>
<keyword id="KW-0698">rRNA processing</keyword>
<evidence type="ECO:0000255" key="1">
    <source>
        <dbReference type="HAMAP-Rule" id="MF_00014"/>
    </source>
</evidence>
<protein>
    <recommendedName>
        <fullName evidence="1">Ribosome maturation factor RimM</fullName>
    </recommendedName>
</protein>
<accession>C1DDY6</accession>